<gene>
    <name evidence="1" type="primary">ruvB</name>
    <name type="ordered locus">Msil_1638</name>
</gene>
<accession>B8EK46</accession>
<evidence type="ECO:0000255" key="1">
    <source>
        <dbReference type="HAMAP-Rule" id="MF_00016"/>
    </source>
</evidence>
<dbReference type="EC" id="3.6.4.-" evidence="1"/>
<dbReference type="EMBL" id="CP001280">
    <property type="protein sequence ID" value="ACK50586.1"/>
    <property type="molecule type" value="Genomic_DNA"/>
</dbReference>
<dbReference type="RefSeq" id="WP_012590656.1">
    <property type="nucleotide sequence ID" value="NC_011666.1"/>
</dbReference>
<dbReference type="SMR" id="B8EK46"/>
<dbReference type="STRING" id="395965.Msil_1638"/>
<dbReference type="KEGG" id="msl:Msil_1638"/>
<dbReference type="eggNOG" id="COG2255">
    <property type="taxonomic scope" value="Bacteria"/>
</dbReference>
<dbReference type="HOGENOM" id="CLU_055599_1_0_5"/>
<dbReference type="OrthoDB" id="9804478at2"/>
<dbReference type="Proteomes" id="UP000002257">
    <property type="component" value="Chromosome"/>
</dbReference>
<dbReference type="GO" id="GO:0005737">
    <property type="term" value="C:cytoplasm"/>
    <property type="evidence" value="ECO:0007669"/>
    <property type="project" value="UniProtKB-SubCell"/>
</dbReference>
<dbReference type="GO" id="GO:0048476">
    <property type="term" value="C:Holliday junction resolvase complex"/>
    <property type="evidence" value="ECO:0007669"/>
    <property type="project" value="UniProtKB-UniRule"/>
</dbReference>
<dbReference type="GO" id="GO:0005524">
    <property type="term" value="F:ATP binding"/>
    <property type="evidence" value="ECO:0007669"/>
    <property type="project" value="UniProtKB-UniRule"/>
</dbReference>
<dbReference type="GO" id="GO:0016887">
    <property type="term" value="F:ATP hydrolysis activity"/>
    <property type="evidence" value="ECO:0007669"/>
    <property type="project" value="InterPro"/>
</dbReference>
<dbReference type="GO" id="GO:0000400">
    <property type="term" value="F:four-way junction DNA binding"/>
    <property type="evidence" value="ECO:0007669"/>
    <property type="project" value="UniProtKB-UniRule"/>
</dbReference>
<dbReference type="GO" id="GO:0009378">
    <property type="term" value="F:four-way junction helicase activity"/>
    <property type="evidence" value="ECO:0007669"/>
    <property type="project" value="InterPro"/>
</dbReference>
<dbReference type="GO" id="GO:0006310">
    <property type="term" value="P:DNA recombination"/>
    <property type="evidence" value="ECO:0007669"/>
    <property type="project" value="UniProtKB-UniRule"/>
</dbReference>
<dbReference type="GO" id="GO:0006281">
    <property type="term" value="P:DNA repair"/>
    <property type="evidence" value="ECO:0007669"/>
    <property type="project" value="UniProtKB-UniRule"/>
</dbReference>
<dbReference type="CDD" id="cd00009">
    <property type="entry name" value="AAA"/>
    <property type="match status" value="1"/>
</dbReference>
<dbReference type="Gene3D" id="1.10.8.60">
    <property type="match status" value="1"/>
</dbReference>
<dbReference type="Gene3D" id="3.40.50.300">
    <property type="entry name" value="P-loop containing nucleotide triphosphate hydrolases"/>
    <property type="match status" value="1"/>
</dbReference>
<dbReference type="Gene3D" id="1.10.10.10">
    <property type="entry name" value="Winged helix-like DNA-binding domain superfamily/Winged helix DNA-binding domain"/>
    <property type="match status" value="1"/>
</dbReference>
<dbReference type="HAMAP" id="MF_00016">
    <property type="entry name" value="DNA_HJ_migration_RuvB"/>
    <property type="match status" value="1"/>
</dbReference>
<dbReference type="InterPro" id="IPR003593">
    <property type="entry name" value="AAA+_ATPase"/>
</dbReference>
<dbReference type="InterPro" id="IPR041445">
    <property type="entry name" value="AAA_lid_4"/>
</dbReference>
<dbReference type="InterPro" id="IPR000641">
    <property type="entry name" value="CbxX/CfxQ"/>
</dbReference>
<dbReference type="InterPro" id="IPR004605">
    <property type="entry name" value="DNA_helicase_Holl-junc_RuvB"/>
</dbReference>
<dbReference type="InterPro" id="IPR027417">
    <property type="entry name" value="P-loop_NTPase"/>
</dbReference>
<dbReference type="InterPro" id="IPR008824">
    <property type="entry name" value="RuvB-like_N"/>
</dbReference>
<dbReference type="InterPro" id="IPR008823">
    <property type="entry name" value="RuvB_C"/>
</dbReference>
<dbReference type="InterPro" id="IPR036388">
    <property type="entry name" value="WH-like_DNA-bd_sf"/>
</dbReference>
<dbReference type="InterPro" id="IPR036390">
    <property type="entry name" value="WH_DNA-bd_sf"/>
</dbReference>
<dbReference type="NCBIfam" id="NF000868">
    <property type="entry name" value="PRK00080.1"/>
    <property type="match status" value="1"/>
</dbReference>
<dbReference type="NCBIfam" id="TIGR00635">
    <property type="entry name" value="ruvB"/>
    <property type="match status" value="1"/>
</dbReference>
<dbReference type="PANTHER" id="PTHR42848">
    <property type="match status" value="1"/>
</dbReference>
<dbReference type="PANTHER" id="PTHR42848:SF1">
    <property type="entry name" value="HOLLIDAY JUNCTION BRANCH MIGRATION COMPLEX SUBUNIT RUVB"/>
    <property type="match status" value="1"/>
</dbReference>
<dbReference type="Pfam" id="PF17864">
    <property type="entry name" value="AAA_lid_4"/>
    <property type="match status" value="1"/>
</dbReference>
<dbReference type="Pfam" id="PF05491">
    <property type="entry name" value="RuvB_C"/>
    <property type="match status" value="1"/>
</dbReference>
<dbReference type="Pfam" id="PF05496">
    <property type="entry name" value="RuvB_N"/>
    <property type="match status" value="1"/>
</dbReference>
<dbReference type="PRINTS" id="PR00819">
    <property type="entry name" value="CBXCFQXSUPER"/>
</dbReference>
<dbReference type="SMART" id="SM00382">
    <property type="entry name" value="AAA"/>
    <property type="match status" value="1"/>
</dbReference>
<dbReference type="SUPFAM" id="SSF52540">
    <property type="entry name" value="P-loop containing nucleoside triphosphate hydrolases"/>
    <property type="match status" value="1"/>
</dbReference>
<dbReference type="SUPFAM" id="SSF46785">
    <property type="entry name" value="Winged helix' DNA-binding domain"/>
    <property type="match status" value="1"/>
</dbReference>
<reference key="1">
    <citation type="journal article" date="2010" name="J. Bacteriol.">
        <title>Complete genome sequence of the aerobic facultative methanotroph Methylocella silvestris BL2.</title>
        <authorList>
            <person name="Chen Y."/>
            <person name="Crombie A."/>
            <person name="Rahman M.T."/>
            <person name="Dedysh S.N."/>
            <person name="Liesack W."/>
            <person name="Stott M.B."/>
            <person name="Alam M."/>
            <person name="Theisen A.R."/>
            <person name="Murrell J.C."/>
            <person name="Dunfield P.F."/>
        </authorList>
    </citation>
    <scope>NUCLEOTIDE SEQUENCE [LARGE SCALE GENOMIC DNA]</scope>
    <source>
        <strain>DSM 15510 / CIP 108128 / LMG 27833 / NCIMB 13906 / BL2</strain>
    </source>
</reference>
<name>RUVB_METSB</name>
<organism>
    <name type="scientific">Methylocella silvestris (strain DSM 15510 / CIP 108128 / LMG 27833 / NCIMB 13906 / BL2)</name>
    <dbReference type="NCBI Taxonomy" id="395965"/>
    <lineage>
        <taxon>Bacteria</taxon>
        <taxon>Pseudomonadati</taxon>
        <taxon>Pseudomonadota</taxon>
        <taxon>Alphaproteobacteria</taxon>
        <taxon>Hyphomicrobiales</taxon>
        <taxon>Beijerinckiaceae</taxon>
        <taxon>Methylocella</taxon>
    </lineage>
</organism>
<comment type="function">
    <text evidence="1">The RuvA-RuvB-RuvC complex processes Holliday junction (HJ) DNA during genetic recombination and DNA repair, while the RuvA-RuvB complex plays an important role in the rescue of blocked DNA replication forks via replication fork reversal (RFR). RuvA specifically binds to HJ cruciform DNA, conferring on it an open structure. The RuvB hexamer acts as an ATP-dependent pump, pulling dsDNA into and through the RuvAB complex. RuvB forms 2 homohexamers on either side of HJ DNA bound by 1 or 2 RuvA tetramers; 4 subunits per hexamer contact DNA at a time. Coordinated motions by a converter formed by DNA-disengaged RuvB subunits stimulates ATP hydrolysis and nucleotide exchange. Immobilization of the converter enables RuvB to convert the ATP-contained energy into a lever motion, pulling 2 nucleotides of DNA out of the RuvA tetramer per ATP hydrolyzed, thus driving DNA branch migration. The RuvB motors rotate together with the DNA substrate, which together with the progressing nucleotide cycle form the mechanistic basis for DNA recombination by continuous HJ branch migration. Branch migration allows RuvC to scan DNA until it finds its consensus sequence, where it cleaves and resolves cruciform DNA.</text>
</comment>
<comment type="catalytic activity">
    <reaction evidence="1">
        <text>ATP + H2O = ADP + phosphate + H(+)</text>
        <dbReference type="Rhea" id="RHEA:13065"/>
        <dbReference type="ChEBI" id="CHEBI:15377"/>
        <dbReference type="ChEBI" id="CHEBI:15378"/>
        <dbReference type="ChEBI" id="CHEBI:30616"/>
        <dbReference type="ChEBI" id="CHEBI:43474"/>
        <dbReference type="ChEBI" id="CHEBI:456216"/>
    </reaction>
</comment>
<comment type="subunit">
    <text evidence="1">Homohexamer. Forms an RuvA(8)-RuvB(12)-Holliday junction (HJ) complex. HJ DNA is sandwiched between 2 RuvA tetramers; dsDNA enters through RuvA and exits via RuvB. An RuvB hexamer assembles on each DNA strand where it exits the tetramer. Each RuvB hexamer is contacted by two RuvA subunits (via domain III) on 2 adjacent RuvB subunits; this complex drives branch migration. In the full resolvosome a probable DNA-RuvA(4)-RuvB(12)-RuvC(2) complex forms which resolves the HJ.</text>
</comment>
<comment type="subcellular location">
    <subcellularLocation>
        <location evidence="1">Cytoplasm</location>
    </subcellularLocation>
</comment>
<comment type="domain">
    <text evidence="1">Has 3 domains, the large (RuvB-L) and small ATPase (RuvB-S) domains and the C-terminal head (RuvB-H) domain. The head domain binds DNA, while the ATPase domains jointly bind ATP, ADP or are empty depending on the state of the subunit in the translocation cycle. During a single DNA translocation step the structure of each domain remains the same, but their relative positions change.</text>
</comment>
<comment type="similarity">
    <text evidence="1">Belongs to the RuvB family.</text>
</comment>
<sequence>MAPQPRRLIAPDAREDDAELSLRPLALADFTGQASARANLKVFIEAAKARREALDHVLFWGPPGLGKTTLAQIVARELGVNFRSTSGPVIAKAGDLAAQLTGLEDRDVLFIDEIHRLNPAVEEILYPAMEDFQLDLIIGEGPGARSVKIDLAKFTLIGATTRAGLLTTPLRDRFGIPIRLEYYTVEELECIVRRGARVLSIPIADEGANEIARRARGTPRIAGRLLRRVRDFAAVDGDPEITRAVADRALRLLDVDHIGLDQMDRRFLQTIALSFGGGPVGVETIAAALSEPRDAIEDIIEPYLIQQGFLQRTPRGRMLTSHAFRHLGLAEPPREKTQFQLFSEGGEE</sequence>
<keyword id="KW-0067">ATP-binding</keyword>
<keyword id="KW-0963">Cytoplasm</keyword>
<keyword id="KW-0227">DNA damage</keyword>
<keyword id="KW-0233">DNA recombination</keyword>
<keyword id="KW-0234">DNA repair</keyword>
<keyword id="KW-0238">DNA-binding</keyword>
<keyword id="KW-0378">Hydrolase</keyword>
<keyword id="KW-0547">Nucleotide-binding</keyword>
<keyword id="KW-1185">Reference proteome</keyword>
<proteinExistence type="inferred from homology"/>
<protein>
    <recommendedName>
        <fullName evidence="1">Holliday junction branch migration complex subunit RuvB</fullName>
        <ecNumber evidence="1">3.6.4.-</ecNumber>
    </recommendedName>
</protein>
<feature type="chain" id="PRO_1000116648" description="Holliday junction branch migration complex subunit RuvB">
    <location>
        <begin position="1"/>
        <end position="348"/>
    </location>
</feature>
<feature type="region of interest" description="Large ATPase domain (RuvB-L)" evidence="1">
    <location>
        <begin position="1"/>
        <end position="183"/>
    </location>
</feature>
<feature type="region of interest" description="Small ATPAse domain (RuvB-S)" evidence="1">
    <location>
        <begin position="184"/>
        <end position="254"/>
    </location>
</feature>
<feature type="region of interest" description="Head domain (RuvB-H)" evidence="1">
    <location>
        <begin position="257"/>
        <end position="348"/>
    </location>
</feature>
<feature type="binding site" evidence="1">
    <location>
        <position position="22"/>
    </location>
    <ligand>
        <name>ATP</name>
        <dbReference type="ChEBI" id="CHEBI:30616"/>
    </ligand>
</feature>
<feature type="binding site" evidence="1">
    <location>
        <position position="23"/>
    </location>
    <ligand>
        <name>ATP</name>
        <dbReference type="ChEBI" id="CHEBI:30616"/>
    </ligand>
</feature>
<feature type="binding site" evidence="1">
    <location>
        <position position="64"/>
    </location>
    <ligand>
        <name>ATP</name>
        <dbReference type="ChEBI" id="CHEBI:30616"/>
    </ligand>
</feature>
<feature type="binding site" evidence="1">
    <location>
        <position position="67"/>
    </location>
    <ligand>
        <name>ATP</name>
        <dbReference type="ChEBI" id="CHEBI:30616"/>
    </ligand>
</feature>
<feature type="binding site" evidence="1">
    <location>
        <position position="68"/>
    </location>
    <ligand>
        <name>ATP</name>
        <dbReference type="ChEBI" id="CHEBI:30616"/>
    </ligand>
</feature>
<feature type="binding site" evidence="1">
    <location>
        <position position="68"/>
    </location>
    <ligand>
        <name>Mg(2+)</name>
        <dbReference type="ChEBI" id="CHEBI:18420"/>
    </ligand>
</feature>
<feature type="binding site" evidence="1">
    <location>
        <position position="69"/>
    </location>
    <ligand>
        <name>ATP</name>
        <dbReference type="ChEBI" id="CHEBI:30616"/>
    </ligand>
</feature>
<feature type="binding site" evidence="1">
    <location>
        <begin position="130"/>
        <end position="132"/>
    </location>
    <ligand>
        <name>ATP</name>
        <dbReference type="ChEBI" id="CHEBI:30616"/>
    </ligand>
</feature>
<feature type="binding site" evidence="1">
    <location>
        <position position="173"/>
    </location>
    <ligand>
        <name>ATP</name>
        <dbReference type="ChEBI" id="CHEBI:30616"/>
    </ligand>
</feature>
<feature type="binding site" evidence="1">
    <location>
        <position position="183"/>
    </location>
    <ligand>
        <name>ATP</name>
        <dbReference type="ChEBI" id="CHEBI:30616"/>
    </ligand>
</feature>
<feature type="binding site" evidence="1">
    <location>
        <position position="220"/>
    </location>
    <ligand>
        <name>ATP</name>
        <dbReference type="ChEBI" id="CHEBI:30616"/>
    </ligand>
</feature>
<feature type="binding site" evidence="1">
    <location>
        <position position="293"/>
    </location>
    <ligand>
        <name>DNA</name>
        <dbReference type="ChEBI" id="CHEBI:16991"/>
    </ligand>
</feature>
<feature type="binding site" evidence="1">
    <location>
        <position position="312"/>
    </location>
    <ligand>
        <name>DNA</name>
        <dbReference type="ChEBI" id="CHEBI:16991"/>
    </ligand>
</feature>
<feature type="binding site" evidence="1">
    <location>
        <position position="317"/>
    </location>
    <ligand>
        <name>DNA</name>
        <dbReference type="ChEBI" id="CHEBI:16991"/>
    </ligand>
</feature>